<gene>
    <name evidence="1" type="primary">frr</name>
    <name type="ordered locus">lwe1329</name>
</gene>
<protein>
    <recommendedName>
        <fullName evidence="1">Ribosome-recycling factor</fullName>
        <shortName evidence="1">RRF</shortName>
    </recommendedName>
    <alternativeName>
        <fullName evidence="1">Ribosome-releasing factor</fullName>
    </alternativeName>
</protein>
<proteinExistence type="inferred from homology"/>
<dbReference type="EMBL" id="AM263198">
    <property type="protein sequence ID" value="CAK20747.1"/>
    <property type="molecule type" value="Genomic_DNA"/>
</dbReference>
<dbReference type="RefSeq" id="WP_011702132.1">
    <property type="nucleotide sequence ID" value="NC_008555.1"/>
</dbReference>
<dbReference type="SMR" id="A0AIB5"/>
<dbReference type="STRING" id="386043.lwe1329"/>
<dbReference type="GeneID" id="61189206"/>
<dbReference type="KEGG" id="lwe:lwe1329"/>
<dbReference type="eggNOG" id="COG0233">
    <property type="taxonomic scope" value="Bacteria"/>
</dbReference>
<dbReference type="HOGENOM" id="CLU_073981_2_0_9"/>
<dbReference type="OrthoDB" id="9804006at2"/>
<dbReference type="Proteomes" id="UP000000779">
    <property type="component" value="Chromosome"/>
</dbReference>
<dbReference type="GO" id="GO:0005737">
    <property type="term" value="C:cytoplasm"/>
    <property type="evidence" value="ECO:0007669"/>
    <property type="project" value="UniProtKB-SubCell"/>
</dbReference>
<dbReference type="GO" id="GO:0043023">
    <property type="term" value="F:ribosomal large subunit binding"/>
    <property type="evidence" value="ECO:0007669"/>
    <property type="project" value="TreeGrafter"/>
</dbReference>
<dbReference type="GO" id="GO:0006415">
    <property type="term" value="P:translational termination"/>
    <property type="evidence" value="ECO:0007669"/>
    <property type="project" value="UniProtKB-UniRule"/>
</dbReference>
<dbReference type="CDD" id="cd00520">
    <property type="entry name" value="RRF"/>
    <property type="match status" value="1"/>
</dbReference>
<dbReference type="FunFam" id="1.10.132.20:FF:000001">
    <property type="entry name" value="Ribosome-recycling factor"/>
    <property type="match status" value="1"/>
</dbReference>
<dbReference type="FunFam" id="3.30.1360.40:FF:000001">
    <property type="entry name" value="Ribosome-recycling factor"/>
    <property type="match status" value="1"/>
</dbReference>
<dbReference type="Gene3D" id="3.30.1360.40">
    <property type="match status" value="1"/>
</dbReference>
<dbReference type="Gene3D" id="1.10.132.20">
    <property type="entry name" value="Ribosome-recycling factor"/>
    <property type="match status" value="1"/>
</dbReference>
<dbReference type="HAMAP" id="MF_00040">
    <property type="entry name" value="RRF"/>
    <property type="match status" value="1"/>
</dbReference>
<dbReference type="InterPro" id="IPR002661">
    <property type="entry name" value="Ribosome_recyc_fac"/>
</dbReference>
<dbReference type="InterPro" id="IPR023584">
    <property type="entry name" value="Ribosome_recyc_fac_dom"/>
</dbReference>
<dbReference type="InterPro" id="IPR036191">
    <property type="entry name" value="RRF_sf"/>
</dbReference>
<dbReference type="NCBIfam" id="TIGR00496">
    <property type="entry name" value="frr"/>
    <property type="match status" value="1"/>
</dbReference>
<dbReference type="PANTHER" id="PTHR20982:SF3">
    <property type="entry name" value="MITOCHONDRIAL RIBOSOME RECYCLING FACTOR PSEUDO 1"/>
    <property type="match status" value="1"/>
</dbReference>
<dbReference type="PANTHER" id="PTHR20982">
    <property type="entry name" value="RIBOSOME RECYCLING FACTOR"/>
    <property type="match status" value="1"/>
</dbReference>
<dbReference type="Pfam" id="PF01765">
    <property type="entry name" value="RRF"/>
    <property type="match status" value="1"/>
</dbReference>
<dbReference type="SUPFAM" id="SSF55194">
    <property type="entry name" value="Ribosome recycling factor, RRF"/>
    <property type="match status" value="1"/>
</dbReference>
<feature type="chain" id="PRO_1000003192" description="Ribosome-recycling factor">
    <location>
        <begin position="1"/>
        <end position="185"/>
    </location>
</feature>
<keyword id="KW-0963">Cytoplasm</keyword>
<keyword id="KW-0648">Protein biosynthesis</keyword>
<reference key="1">
    <citation type="journal article" date="2006" name="J. Bacteriol.">
        <title>Whole-genome sequence of Listeria welshimeri reveals common steps in genome reduction with Listeria innocua as compared to Listeria monocytogenes.</title>
        <authorList>
            <person name="Hain T."/>
            <person name="Steinweg C."/>
            <person name="Kuenne C.T."/>
            <person name="Billion A."/>
            <person name="Ghai R."/>
            <person name="Chatterjee S.S."/>
            <person name="Domann E."/>
            <person name="Kaerst U."/>
            <person name="Goesmann A."/>
            <person name="Bekel T."/>
            <person name="Bartels D."/>
            <person name="Kaiser O."/>
            <person name="Meyer F."/>
            <person name="Puehler A."/>
            <person name="Weisshaar B."/>
            <person name="Wehland J."/>
            <person name="Liang C."/>
            <person name="Dandekar T."/>
            <person name="Lampidis R."/>
            <person name="Kreft J."/>
            <person name="Goebel W."/>
            <person name="Chakraborty T."/>
        </authorList>
    </citation>
    <scope>NUCLEOTIDE SEQUENCE [LARGE SCALE GENOMIC DNA]</scope>
    <source>
        <strain>ATCC 35897 / DSM 20650 / CCUG 15529 / CIP 8149 / NCTC 11857 / SLCC 5334 / V8</strain>
    </source>
</reference>
<accession>A0AIB5</accession>
<name>RRF_LISW6</name>
<organism>
    <name type="scientific">Listeria welshimeri serovar 6b (strain ATCC 35897 / DSM 20650 / CCUG 15529 / CIP 8149 / NCTC 11857 / SLCC 5334 / V8)</name>
    <dbReference type="NCBI Taxonomy" id="386043"/>
    <lineage>
        <taxon>Bacteria</taxon>
        <taxon>Bacillati</taxon>
        <taxon>Bacillota</taxon>
        <taxon>Bacilli</taxon>
        <taxon>Bacillales</taxon>
        <taxon>Listeriaceae</taxon>
        <taxon>Listeria</taxon>
    </lineage>
</organism>
<evidence type="ECO:0000255" key="1">
    <source>
        <dbReference type="HAMAP-Rule" id="MF_00040"/>
    </source>
</evidence>
<comment type="function">
    <text evidence="1">Responsible for the release of ribosomes from messenger RNA at the termination of protein biosynthesis. May increase the efficiency of translation by recycling ribosomes from one round of translation to another.</text>
</comment>
<comment type="subcellular location">
    <subcellularLocation>
        <location evidence="1">Cytoplasm</location>
    </subcellularLocation>
</comment>
<comment type="similarity">
    <text evidence="1">Belongs to the RRF family.</text>
</comment>
<sequence>MSKEVLTKSKEKMDKAEQALTRQLGTIRAGRANASLLDRLSVDYYGAPTPVNQMASISVPEARMLLITPYDKTVLGEIEKAILKSDLGLTPNNDGSVLRLSIPQLTEERRKELVKEVKKEAEEAKVAVRNIRREANEELKKLEKNGDITEDDLRSYGEDVQKLTDESIKNIDNITKDKEAEILEV</sequence>